<dbReference type="EMBL" id="AB070002">
    <property type="protein sequence ID" value="BAB62947.1"/>
    <property type="molecule type" value="mRNA"/>
</dbReference>
<dbReference type="EMBL" id="AB178986">
    <property type="protein sequence ID" value="BAE02037.1"/>
    <property type="molecule type" value="mRNA"/>
</dbReference>
<dbReference type="eggNOG" id="ENOG502QT97">
    <property type="taxonomic scope" value="Eukaryota"/>
</dbReference>
<dbReference type="Proteomes" id="UP000233100">
    <property type="component" value="Unplaced"/>
</dbReference>
<dbReference type="GO" id="GO:0120293">
    <property type="term" value="C:dynein axonemal particle"/>
    <property type="evidence" value="ECO:0000250"/>
    <property type="project" value="UniProtKB"/>
</dbReference>
<dbReference type="GO" id="GO:0070286">
    <property type="term" value="P:axonemal dynein complex assembly"/>
    <property type="evidence" value="ECO:0000250"/>
    <property type="project" value="UniProtKB"/>
</dbReference>
<dbReference type="GO" id="GO:0044458">
    <property type="term" value="P:motile cilium assembly"/>
    <property type="evidence" value="ECO:0000250"/>
    <property type="project" value="UniProtKB"/>
</dbReference>
<dbReference type="InterPro" id="IPR039304">
    <property type="entry name" value="DNAAF3"/>
</dbReference>
<dbReference type="InterPro" id="IPR028235">
    <property type="entry name" value="DNAAF3_C"/>
</dbReference>
<dbReference type="InterPro" id="IPR027974">
    <property type="entry name" value="DUF4470"/>
</dbReference>
<dbReference type="PANTHER" id="PTHR22118">
    <property type="entry name" value="DYNEIN ASSEMBLY FACTOR 3, AXONEMAL"/>
    <property type="match status" value="1"/>
</dbReference>
<dbReference type="PANTHER" id="PTHR22118:SF14">
    <property type="entry name" value="DYNEIN AXONEMAL ASSEMBLY FACTOR 3"/>
    <property type="match status" value="1"/>
</dbReference>
<dbReference type="Pfam" id="PF14737">
    <property type="entry name" value="DUF4470"/>
    <property type="match status" value="1"/>
</dbReference>
<dbReference type="Pfam" id="PF14740">
    <property type="entry name" value="DUF4471"/>
    <property type="match status" value="1"/>
</dbReference>
<proteinExistence type="evidence at transcript level"/>
<comment type="function">
    <text evidence="1">Required for the assembly of axonemal inner and outer dynein arms. Involved in preassembly of dyneins into complexes before their transport into cilia (By similarity).</text>
</comment>
<comment type="subcellular location">
    <subcellularLocation>
        <location evidence="1">Cytoplasm</location>
    </subcellularLocation>
    <subcellularLocation>
        <location evidence="2">Dynein axonemal particle</location>
    </subcellularLocation>
</comment>
<comment type="similarity">
    <text evidence="4">Belongs to the DNAAF3 family.</text>
</comment>
<name>DAAF3_MACFA</name>
<protein>
    <recommendedName>
        <fullName>Dynein axonemal assembly factor 3</fullName>
    </recommendedName>
</protein>
<sequence length="540" mass="59345">MTTPAGSGRGFGSVSWWGLSPALDLQAESPPVDPDSQADTVHSTPELDVLLLGSVDGRHLLRTLSRAKLWPRRRFNFFALENNLEAVARHMLIFSLALEDPEKMGLQERSETFLEVWGNALLRPPVAAFVRAQADLLAHLVPEPDRLEEQLPWLSLRALKFRERDALEAVFRFWAGGEKGPEAFPMSRLWDSRLRHYLGSRYDARHGVSDWDLRMKLHDRGAQVIHTQEFRRWRDTGVAFELRDSSAYHVPNRTLASGRLLSYRGERVAARGYWGDIATGPFVAFGIEADDESLLRTSNGQPVKTAGEITQHNVTELLREVAAWGRARASRGHPEEQQRSEASPEPGTPASTPESFTVHFLPLNSAETLHHKSCYNGRFQLLYVACGVVHLLSPELGACVAPGGNLIVELARYLVDMRQEQLQGFNTQVGERAQAAGFAPQTGARPSETFARFCKSQDSALGSTDPAVEPGTPSLDVLAQPLEASSPAPEGLTQPLQGGTPHWEPCQLPSESPGSLSEVLAQPQGALALSNCESHSNTGV</sequence>
<feature type="chain" id="PRO_0000297581" description="Dynein axonemal assembly factor 3">
    <location>
        <begin position="1"/>
        <end position="540"/>
    </location>
</feature>
<feature type="region of interest" description="Disordered" evidence="3">
    <location>
        <begin position="328"/>
        <end position="355"/>
    </location>
</feature>
<feature type="region of interest" description="Disordered" evidence="3">
    <location>
        <begin position="485"/>
        <end position="522"/>
    </location>
</feature>
<evidence type="ECO:0000250" key="1"/>
<evidence type="ECO:0000250" key="2">
    <source>
        <dbReference type="UniProtKB" id="Q32NQ7"/>
    </source>
</evidence>
<evidence type="ECO:0000256" key="3">
    <source>
        <dbReference type="SAM" id="MobiDB-lite"/>
    </source>
</evidence>
<evidence type="ECO:0000305" key="4"/>
<organism>
    <name type="scientific">Macaca fascicularis</name>
    <name type="common">Crab-eating macaque</name>
    <name type="synonym">Cynomolgus monkey</name>
    <dbReference type="NCBI Taxonomy" id="9541"/>
    <lineage>
        <taxon>Eukaryota</taxon>
        <taxon>Metazoa</taxon>
        <taxon>Chordata</taxon>
        <taxon>Craniata</taxon>
        <taxon>Vertebrata</taxon>
        <taxon>Euteleostomi</taxon>
        <taxon>Mammalia</taxon>
        <taxon>Eutheria</taxon>
        <taxon>Euarchontoglires</taxon>
        <taxon>Primates</taxon>
        <taxon>Haplorrhini</taxon>
        <taxon>Catarrhini</taxon>
        <taxon>Cercopithecidae</taxon>
        <taxon>Cercopithecinae</taxon>
        <taxon>Macaca</taxon>
    </lineage>
</organism>
<gene>
    <name type="primary">DNAAF3</name>
    <name type="ORF">QtsA-10947</name>
</gene>
<reference key="1">
    <citation type="journal article" date="2002" name="BMC Genomics">
        <title>Cynomolgus monkey testicular cDNAs for discovery of novel human genes in the human genome sequence.</title>
        <authorList>
            <person name="Osada N."/>
            <person name="Hida M."/>
            <person name="Kusuda J."/>
            <person name="Tanuma R."/>
            <person name="Hirata M."/>
            <person name="Suto Y."/>
            <person name="Hirai M."/>
            <person name="Terao K."/>
            <person name="Sugano S."/>
            <person name="Hashimoto K."/>
        </authorList>
    </citation>
    <scope>NUCLEOTIDE SEQUENCE [LARGE SCALE MRNA]</scope>
    <source>
        <tissue>Testis</tissue>
    </source>
</reference>
<reference key="2">
    <citation type="submission" date="2005-06" db="EMBL/GenBank/DDBJ databases">
        <title>DNA sequences of macaque genes expressed in brain or testis and its evolutionary implications.</title>
        <authorList>
            <consortium name="International consortium for macaque cDNA sequencing and analysis"/>
        </authorList>
    </citation>
    <scope>NUCLEOTIDE SEQUENCE [LARGE SCALE MRNA]</scope>
    <source>
        <tissue>Testis</tissue>
    </source>
</reference>
<keyword id="KW-0970">Cilium biogenesis/degradation</keyword>
<keyword id="KW-0963">Cytoplasm</keyword>
<keyword id="KW-1185">Reference proteome</keyword>
<accession>Q95K25</accession>